<proteinExistence type="inferred from homology"/>
<evidence type="ECO:0000255" key="1">
    <source>
        <dbReference type="HAMAP-Rule" id="MF_00067"/>
    </source>
</evidence>
<evidence type="ECO:0000269" key="2">
    <source>
    </source>
</evidence>
<name>GMHA_ANETH</name>
<organism>
    <name type="scientific">Aneurinibacillus thermoaerophilus</name>
    <dbReference type="NCBI Taxonomy" id="143495"/>
    <lineage>
        <taxon>Bacteria</taxon>
        <taxon>Bacillati</taxon>
        <taxon>Bacillota</taxon>
        <taxon>Bacilli</taxon>
        <taxon>Bacillales</taxon>
        <taxon>Paenibacillaceae</taxon>
        <taxon>Aneurinibacillus group</taxon>
        <taxon>Aneurinibacillus</taxon>
    </lineage>
</organism>
<keyword id="KW-0119">Carbohydrate metabolism</keyword>
<keyword id="KW-0961">Cell wall biogenesis/degradation</keyword>
<keyword id="KW-0963">Cytoplasm</keyword>
<keyword id="KW-0413">Isomerase</keyword>
<keyword id="KW-0479">Metal-binding</keyword>
<keyword id="KW-0862">Zinc</keyword>
<comment type="function">
    <text evidence="1 2">Catalyzes the isomerization of sedoheptulose 7-phosphate in D-glycero-D-manno-heptose 7-phosphate.</text>
</comment>
<comment type="catalytic activity">
    <reaction evidence="1">
        <text>2 D-sedoheptulose 7-phosphate = D-glycero-alpha-D-manno-heptose 7-phosphate + D-glycero-beta-D-manno-heptose 7-phosphate</text>
        <dbReference type="Rhea" id="RHEA:27489"/>
        <dbReference type="ChEBI" id="CHEBI:57483"/>
        <dbReference type="ChEBI" id="CHEBI:60203"/>
        <dbReference type="ChEBI" id="CHEBI:60204"/>
        <dbReference type="EC" id="5.3.1.28"/>
    </reaction>
</comment>
<comment type="cofactor">
    <cofactor evidence="1">
        <name>Zn(2+)</name>
        <dbReference type="ChEBI" id="CHEBI:29105"/>
    </cofactor>
    <text evidence="1">Binds 1 zinc ion per subunit.</text>
</comment>
<comment type="pathway">
    <text evidence="1">Carbohydrate biosynthesis; D-glycero-D-manno-heptose 7-phosphate biosynthesis; D-glycero-alpha-D-manno-heptose 7-phosphate and D-glycero-beta-D-manno-heptose 7-phosphate from sedoheptulose 7-phosphate: step 1/1.</text>
</comment>
<comment type="pathway">
    <text>Cell surface structure biogenesis; S-layer biogenesis.</text>
</comment>
<comment type="subcellular location">
    <subcellularLocation>
        <location evidence="1">Cytoplasm</location>
    </subcellularLocation>
</comment>
<comment type="miscellaneous">
    <text evidence="1">The reaction produces a racemic mixture of D-glycero-alpha-D-manno-heptose 7-phosphate and D-glycero-beta-D-manno-heptose 7-phosphate.</text>
</comment>
<comment type="similarity">
    <text evidence="1">Belongs to the SIS family. GmhA subfamily.</text>
</comment>
<protein>
    <recommendedName>
        <fullName evidence="1">Phosphoheptose isomerase</fullName>
        <ecNumber evidence="1">5.3.1.28</ecNumber>
    </recommendedName>
    <alternativeName>
        <fullName evidence="1">Sedoheptulose 7-phosphate isomerase</fullName>
    </alternativeName>
</protein>
<sequence length="198" mass="21495">MNDYIKSHIQSSINVKEAILADEELLRLIEQVATKAIEVYQNGNKILLAGNGGSAADAQHIAGEFVSRFYFDRPGLPSLALTTDTSILTAIGNDYGYEHLFSRQLQANGMEGDMFIGISTSGNSSNIIKALEMCKEKGIIAVGLTGATGGKMARLCDYCIKVPSKETPRIQESHIVIGHIICALVEEAIFRNKFVSVK</sequence>
<gene>
    <name evidence="1" type="primary">gmhA</name>
</gene>
<accession>Q9AGY7</accession>
<dbReference type="EC" id="5.3.1.28" evidence="1"/>
<dbReference type="EMBL" id="AF324836">
    <property type="protein sequence ID" value="AAK27851.1"/>
    <property type="molecule type" value="Genomic_DNA"/>
</dbReference>
<dbReference type="RefSeq" id="WP_327874957.1">
    <property type="nucleotide sequence ID" value="NZ_JARLVS010000037.1"/>
</dbReference>
<dbReference type="SMR" id="Q9AGY7"/>
<dbReference type="KEGG" id="ag:AAK27851"/>
<dbReference type="BioCyc" id="MetaCyc:MONOMER-15573"/>
<dbReference type="BRENDA" id="5.3.1.28">
    <property type="organism ID" value="344"/>
</dbReference>
<dbReference type="UniPathway" id="UPA00041">
    <property type="reaction ID" value="UER00436"/>
</dbReference>
<dbReference type="UniPathway" id="UPA00977"/>
<dbReference type="GO" id="GO:0005737">
    <property type="term" value="C:cytoplasm"/>
    <property type="evidence" value="ECO:0007669"/>
    <property type="project" value="UniProtKB-SubCell"/>
</dbReference>
<dbReference type="GO" id="GO:0097367">
    <property type="term" value="F:carbohydrate derivative binding"/>
    <property type="evidence" value="ECO:0007669"/>
    <property type="project" value="InterPro"/>
</dbReference>
<dbReference type="GO" id="GO:0008968">
    <property type="term" value="F:D-sedoheptulose 7-phosphate isomerase activity"/>
    <property type="evidence" value="ECO:0007669"/>
    <property type="project" value="UniProtKB-UniRule"/>
</dbReference>
<dbReference type="GO" id="GO:0008270">
    <property type="term" value="F:zinc ion binding"/>
    <property type="evidence" value="ECO:0007669"/>
    <property type="project" value="UniProtKB-UniRule"/>
</dbReference>
<dbReference type="GO" id="GO:0005975">
    <property type="term" value="P:carbohydrate metabolic process"/>
    <property type="evidence" value="ECO:0007669"/>
    <property type="project" value="UniProtKB-UniRule"/>
</dbReference>
<dbReference type="GO" id="GO:0071555">
    <property type="term" value="P:cell wall organization"/>
    <property type="evidence" value="ECO:0007669"/>
    <property type="project" value="UniProtKB-KW"/>
</dbReference>
<dbReference type="GO" id="GO:2001061">
    <property type="term" value="P:D-glycero-D-manno-heptose 7-phosphate biosynthetic process"/>
    <property type="evidence" value="ECO:0007669"/>
    <property type="project" value="UniProtKB-UniPathway"/>
</dbReference>
<dbReference type="GO" id="GO:0045232">
    <property type="term" value="P:S-layer organization"/>
    <property type="evidence" value="ECO:0007669"/>
    <property type="project" value="UniProtKB-UniPathway"/>
</dbReference>
<dbReference type="CDD" id="cd05006">
    <property type="entry name" value="SIS_GmhA"/>
    <property type="match status" value="1"/>
</dbReference>
<dbReference type="Gene3D" id="3.40.50.10490">
    <property type="entry name" value="Glucose-6-phosphate isomerase like protein, domain 1"/>
    <property type="match status" value="1"/>
</dbReference>
<dbReference type="HAMAP" id="MF_00067">
    <property type="entry name" value="GmhA"/>
    <property type="match status" value="1"/>
</dbReference>
<dbReference type="InterPro" id="IPR035461">
    <property type="entry name" value="GmhA/DiaA"/>
</dbReference>
<dbReference type="InterPro" id="IPR004515">
    <property type="entry name" value="Phosphoheptose_Isoase"/>
</dbReference>
<dbReference type="InterPro" id="IPR001347">
    <property type="entry name" value="SIS_dom"/>
</dbReference>
<dbReference type="InterPro" id="IPR046348">
    <property type="entry name" value="SIS_dom_sf"/>
</dbReference>
<dbReference type="InterPro" id="IPR050099">
    <property type="entry name" value="SIS_GmhA/DiaA_subfam"/>
</dbReference>
<dbReference type="PANTHER" id="PTHR30390:SF6">
    <property type="entry name" value="DNAA INITIATOR-ASSOCIATING PROTEIN DIAA"/>
    <property type="match status" value="1"/>
</dbReference>
<dbReference type="PANTHER" id="PTHR30390">
    <property type="entry name" value="SEDOHEPTULOSE 7-PHOSPHATE ISOMERASE / DNAA INITIATOR-ASSOCIATING FACTOR FOR REPLICATION INITIATION"/>
    <property type="match status" value="1"/>
</dbReference>
<dbReference type="Pfam" id="PF13580">
    <property type="entry name" value="SIS_2"/>
    <property type="match status" value="1"/>
</dbReference>
<dbReference type="SUPFAM" id="SSF53697">
    <property type="entry name" value="SIS domain"/>
    <property type="match status" value="1"/>
</dbReference>
<dbReference type="PROSITE" id="PS51464">
    <property type="entry name" value="SIS"/>
    <property type="match status" value="1"/>
</dbReference>
<reference key="1">
    <citation type="journal article" date="2001" name="J. Biol. Chem.">
        <title>Biosynthesis of nucleotide-activated D-glycero-D-manno-heptose.</title>
        <authorList>
            <person name="Kneidinger B."/>
            <person name="Graninger M."/>
            <person name="Puchberger M."/>
            <person name="Kosma P."/>
            <person name="Messner P."/>
        </authorList>
    </citation>
    <scope>NUCLEOTIDE SEQUENCE [GENOMIC DNA]</scope>
    <scope>FUNCTION</scope>
    <scope>GDP-D-GLYCERO-ALPHA-D-MANNO-HEPTOSE BIOSYNTHESIS PATHWAY</scope>
    <source>
        <strain>ATCC 12990 / DSM 10155 / LMG 17166</strain>
    </source>
</reference>
<reference key="2">
    <citation type="journal article" date="2002" name="Microbiology">
        <title>Novel pathways for biosynthesis of nucleotide-activated glycero-manno-heptose precursors of bacterial glycoproteins and cell surface polysaccharides.</title>
        <authorList>
            <person name="Valvano M.A."/>
            <person name="Messner P."/>
            <person name="Kosma P."/>
        </authorList>
    </citation>
    <scope>BIOSYNTHESIS OF NUCLEOTIDE-ACTIVATED GLYCERO-MANNO-HEPTOSE</scope>
</reference>
<feature type="chain" id="PRO_0000136516" description="Phosphoheptose isomerase">
    <location>
        <begin position="1"/>
        <end position="198"/>
    </location>
</feature>
<feature type="domain" description="SIS" evidence="1">
    <location>
        <begin position="36"/>
        <end position="195"/>
    </location>
</feature>
<feature type="binding site" evidence="1">
    <location>
        <begin position="51"/>
        <end position="53"/>
    </location>
    <ligand>
        <name>substrate</name>
    </ligand>
</feature>
<feature type="binding site" evidence="1">
    <location>
        <position position="60"/>
    </location>
    <ligand>
        <name>Zn(2+)</name>
        <dbReference type="ChEBI" id="CHEBI:29105"/>
    </ligand>
</feature>
<feature type="binding site" evidence="1">
    <location>
        <position position="64"/>
    </location>
    <ligand>
        <name>substrate</name>
    </ligand>
</feature>
<feature type="binding site" evidence="1">
    <location>
        <position position="64"/>
    </location>
    <ligand>
        <name>Zn(2+)</name>
        <dbReference type="ChEBI" id="CHEBI:29105"/>
    </ligand>
</feature>
<feature type="binding site" evidence="1">
    <location>
        <begin position="93"/>
        <end position="94"/>
    </location>
    <ligand>
        <name>substrate</name>
    </ligand>
</feature>
<feature type="binding site" evidence="1">
    <location>
        <begin position="119"/>
        <end position="121"/>
    </location>
    <ligand>
        <name>substrate</name>
    </ligand>
</feature>
<feature type="binding site" evidence="1">
    <location>
        <position position="124"/>
    </location>
    <ligand>
        <name>substrate</name>
    </ligand>
</feature>
<feature type="binding site" evidence="1">
    <location>
        <position position="171"/>
    </location>
    <ligand>
        <name>substrate</name>
    </ligand>
</feature>
<feature type="binding site" evidence="1">
    <location>
        <position position="171"/>
    </location>
    <ligand>
        <name>Zn(2+)</name>
        <dbReference type="ChEBI" id="CHEBI:29105"/>
    </ligand>
</feature>
<feature type="binding site" evidence="1">
    <location>
        <position position="179"/>
    </location>
    <ligand>
        <name>Zn(2+)</name>
        <dbReference type="ChEBI" id="CHEBI:29105"/>
    </ligand>
</feature>